<reference key="1">
    <citation type="submission" date="2017-04" db="EMBL/GenBank/DDBJ databases">
        <title>Arabidopsis glycosyltransferases: an update.</title>
        <authorList>
            <person name="Zeng W."/>
            <person name="Gluza P."/>
            <person name="Heazlewood J."/>
        </authorList>
    </citation>
    <scope>NUCLEOTIDE SEQUENCE [MRNA]</scope>
    <source>
        <strain>cv. Columbia</strain>
    </source>
</reference>
<reference key="2">
    <citation type="journal article" date="1999" name="Nature">
        <title>Sequence and analysis of chromosome 2 of the plant Arabidopsis thaliana.</title>
        <authorList>
            <person name="Lin X."/>
            <person name="Kaul S."/>
            <person name="Rounsley S.D."/>
            <person name="Shea T.P."/>
            <person name="Benito M.-I."/>
            <person name="Town C.D."/>
            <person name="Fujii C.Y."/>
            <person name="Mason T.M."/>
            <person name="Bowman C.L."/>
            <person name="Barnstead M.E."/>
            <person name="Feldblyum T.V."/>
            <person name="Buell C.R."/>
            <person name="Ketchum K.A."/>
            <person name="Lee J.J."/>
            <person name="Ronning C.M."/>
            <person name="Koo H.L."/>
            <person name="Moffat K.S."/>
            <person name="Cronin L.A."/>
            <person name="Shen M."/>
            <person name="Pai G."/>
            <person name="Van Aken S."/>
            <person name="Umayam L."/>
            <person name="Tallon L.J."/>
            <person name="Gill J.E."/>
            <person name="Adams M.D."/>
            <person name="Carrera A.J."/>
            <person name="Creasy T.H."/>
            <person name="Goodman H.M."/>
            <person name="Somerville C.R."/>
            <person name="Copenhaver G.P."/>
            <person name="Preuss D."/>
            <person name="Nierman W.C."/>
            <person name="White O."/>
            <person name="Eisen J.A."/>
            <person name="Salzberg S.L."/>
            <person name="Fraser C.M."/>
            <person name="Venter J.C."/>
        </authorList>
    </citation>
    <scope>NUCLEOTIDE SEQUENCE [LARGE SCALE GENOMIC DNA]</scope>
    <source>
        <strain>cv. Columbia</strain>
    </source>
</reference>
<reference key="3">
    <citation type="journal article" date="2017" name="Plant J.">
        <title>Araport11: a complete reannotation of the Arabidopsis thaliana reference genome.</title>
        <authorList>
            <person name="Cheng C.Y."/>
            <person name="Krishnakumar V."/>
            <person name="Chan A.P."/>
            <person name="Thibaud-Nissen F."/>
            <person name="Schobel S."/>
            <person name="Town C.D."/>
        </authorList>
    </citation>
    <scope>GENOME REANNOTATION</scope>
    <source>
        <strain>cv. Columbia</strain>
    </source>
</reference>
<reference key="4">
    <citation type="journal article" date="2003" name="Science">
        <title>Empirical analysis of transcriptional activity in the Arabidopsis genome.</title>
        <authorList>
            <person name="Yamada K."/>
            <person name="Lim J."/>
            <person name="Dale J.M."/>
            <person name="Chen H."/>
            <person name="Shinn P."/>
            <person name="Palm C.J."/>
            <person name="Southwick A.M."/>
            <person name="Wu H.C."/>
            <person name="Kim C.J."/>
            <person name="Nguyen M."/>
            <person name="Pham P.K."/>
            <person name="Cheuk R.F."/>
            <person name="Karlin-Newmann G."/>
            <person name="Liu S.X."/>
            <person name="Lam B."/>
            <person name="Sakano H."/>
            <person name="Wu T."/>
            <person name="Yu G."/>
            <person name="Miranda M."/>
            <person name="Quach H.L."/>
            <person name="Tripp M."/>
            <person name="Chang C.H."/>
            <person name="Lee J.M."/>
            <person name="Toriumi M.J."/>
            <person name="Chan M.M."/>
            <person name="Tang C.C."/>
            <person name="Onodera C.S."/>
            <person name="Deng J.M."/>
            <person name="Akiyama K."/>
            <person name="Ansari Y."/>
            <person name="Arakawa T."/>
            <person name="Banh J."/>
            <person name="Banno F."/>
            <person name="Bowser L."/>
            <person name="Brooks S.Y."/>
            <person name="Carninci P."/>
            <person name="Chao Q."/>
            <person name="Choy N."/>
            <person name="Enju A."/>
            <person name="Goldsmith A.D."/>
            <person name="Gurjal M."/>
            <person name="Hansen N.F."/>
            <person name="Hayashizaki Y."/>
            <person name="Johnson-Hopson C."/>
            <person name="Hsuan V.W."/>
            <person name="Iida K."/>
            <person name="Karnes M."/>
            <person name="Khan S."/>
            <person name="Koesema E."/>
            <person name="Ishida J."/>
            <person name="Jiang P.X."/>
            <person name="Jones T."/>
            <person name="Kawai J."/>
            <person name="Kamiya A."/>
            <person name="Meyers C."/>
            <person name="Nakajima M."/>
            <person name="Narusaka M."/>
            <person name="Seki M."/>
            <person name="Sakurai T."/>
            <person name="Satou M."/>
            <person name="Tamse R."/>
            <person name="Vaysberg M."/>
            <person name="Wallender E.K."/>
            <person name="Wong C."/>
            <person name="Yamamura Y."/>
            <person name="Yuan S."/>
            <person name="Shinozaki K."/>
            <person name="Davis R.W."/>
            <person name="Theologis A."/>
            <person name="Ecker J.R."/>
        </authorList>
    </citation>
    <scope>NUCLEOTIDE SEQUENCE [LARGE SCALE MRNA]</scope>
    <source>
        <strain>cv. Columbia</strain>
    </source>
</reference>
<reference key="5">
    <citation type="submission" date="2006-07" db="EMBL/GenBank/DDBJ databases">
        <title>Large-scale analysis of RIKEN Arabidopsis full-length (RAFL) cDNAs.</title>
        <authorList>
            <person name="Totoki Y."/>
            <person name="Seki M."/>
            <person name="Ishida J."/>
            <person name="Nakajima M."/>
            <person name="Enju A."/>
            <person name="Kamiya A."/>
            <person name="Narusaka M."/>
            <person name="Shin-i T."/>
            <person name="Nakagawa M."/>
            <person name="Sakamoto N."/>
            <person name="Oishi K."/>
            <person name="Kohara Y."/>
            <person name="Kobayashi M."/>
            <person name="Toyoda A."/>
            <person name="Sakaki Y."/>
            <person name="Sakurai T."/>
            <person name="Iida K."/>
            <person name="Akiyama K."/>
            <person name="Satou M."/>
            <person name="Toyoda T."/>
            <person name="Konagaya A."/>
            <person name="Carninci P."/>
            <person name="Kawai J."/>
            <person name="Hayashizaki Y."/>
            <person name="Shinozaki K."/>
        </authorList>
    </citation>
    <scope>NUCLEOTIDE SEQUENCE [LARGE SCALE MRNA]</scope>
    <source>
        <strain>cv. Columbia</strain>
    </source>
</reference>
<reference key="6">
    <citation type="journal article" date="2012" name="Front. Plant Sci.">
        <title>Plant glycosyltransferases beyond CAZy: a perspective on DUF families.</title>
        <authorList>
            <person name="Hansen S.F."/>
            <person name="Harholt J."/>
            <person name="Oikawa A."/>
            <person name="Scheller H.V."/>
        </authorList>
    </citation>
    <scope>GENE FAMILY</scope>
    <scope>REVIEW</scope>
</reference>
<reference key="7">
    <citation type="journal article" date="2012" name="PLoS ONE">
        <title>The FRIABLE1 gene product affects cell adhesion in Arabidopsis.</title>
        <authorList>
            <person name="Neumetzler L."/>
            <person name="Humphrey T."/>
            <person name="Lumba S."/>
            <person name="Snyder S."/>
            <person name="Yeats T.H."/>
            <person name="Usadel B."/>
            <person name="Vasilevski A."/>
            <person name="Patel J."/>
            <person name="Rose J.K."/>
            <person name="Persson S."/>
            <person name="Bonetta D."/>
        </authorList>
    </citation>
    <scope>GENE FAMILY</scope>
</reference>
<reference key="8">
    <citation type="journal article" date="2012" name="PLoS ONE">
        <title>Identification of putative rhamnogalacturonan-II specific glycosyltransferases in Arabidopsis using a combination of bioinformatics approaches.</title>
        <authorList>
            <person name="Voxeur A."/>
            <person name="Andre A."/>
            <person name="Breton C."/>
            <person name="Lerouge P."/>
        </authorList>
    </citation>
    <scope>GENE FAMILY</scope>
</reference>
<reference key="9">
    <citation type="journal article" date="2013" name="Plant J.">
        <title>Identification of an additional protein involved in mannan biosynthesis.</title>
        <authorList>
            <person name="Wang Y."/>
            <person name="Mortimer J.C."/>
            <person name="Davis J."/>
            <person name="Dupree P."/>
            <person name="Keegstra K."/>
        </authorList>
    </citation>
    <scope>GENE FAMILY</scope>
</reference>
<reference key="10">
    <citation type="journal article" date="2014" name="Plant J.">
        <title>The plant glycosyltransferase clone collection for functional genomics.</title>
        <authorList>
            <person name="Lao J."/>
            <person name="Oikawa A."/>
            <person name="Bromley J.R."/>
            <person name="McInerney P."/>
            <person name="Suttangkakul A."/>
            <person name="Smith-Moritz A.M."/>
            <person name="Plahar H."/>
            <person name="Chiu T.-Y."/>
            <person name="Gonzalez Fernandez-Nino S.M.G."/>
            <person name="Ebert B."/>
            <person name="Yang F."/>
            <person name="Christiansen K.M."/>
            <person name="Hansen S.F."/>
            <person name="Stonebloom S."/>
            <person name="Adams P.D."/>
            <person name="Ronald P.C."/>
            <person name="Hillson N.J."/>
            <person name="Hadi M.Z."/>
            <person name="Vega-Sanchez M.E."/>
            <person name="Loque D."/>
            <person name="Scheller H.V."/>
            <person name="Heazlewood J.L."/>
        </authorList>
    </citation>
    <scope>WEB RESOURCE</scope>
</reference>
<reference key="11">
    <citation type="journal article" date="2016" name="Development">
        <title>Cell adhesion in plants is under the control of putative O-fucosyltransferases.</title>
        <authorList>
            <person name="Verger S."/>
            <person name="Chabout S."/>
            <person name="Gineau E."/>
            <person name="Mouille G."/>
        </authorList>
    </citation>
    <scope>SUBCELLULAR LOCATION</scope>
    <scope>TISSUE SPECIFICITY</scope>
    <scope>FUNCTION</scope>
</reference>
<name>ESMD1_ARATH</name>
<proteinExistence type="evidence at transcript level"/>
<keyword id="KW-0119">Carbohydrate metabolism</keyword>
<keyword id="KW-0130">Cell adhesion</keyword>
<keyword id="KW-0961">Cell wall biogenesis/degradation</keyword>
<keyword id="KW-0294">Fucose metabolism</keyword>
<keyword id="KW-0325">Glycoprotein</keyword>
<keyword id="KW-0328">Glycosyltransferase</keyword>
<keyword id="KW-0333">Golgi apparatus</keyword>
<keyword id="KW-0472">Membrane</keyword>
<keyword id="KW-1185">Reference proteome</keyword>
<keyword id="KW-0735">Signal-anchor</keyword>
<keyword id="KW-0808">Transferase</keyword>
<keyword id="KW-0812">Transmembrane</keyword>
<keyword id="KW-1133">Transmembrane helix</keyword>
<gene>
    <name evidence="5 9" type="primary">ESMD1</name>
    <name evidence="6" type="synonym">OFUT17</name>
    <name evidence="7" type="ordered locus">At2g01480</name>
    <name evidence="8" type="ORF">F2I9.10</name>
</gene>
<organism>
    <name type="scientific">Arabidopsis thaliana</name>
    <name type="common">Mouse-ear cress</name>
    <dbReference type="NCBI Taxonomy" id="3702"/>
    <lineage>
        <taxon>Eukaryota</taxon>
        <taxon>Viridiplantae</taxon>
        <taxon>Streptophyta</taxon>
        <taxon>Embryophyta</taxon>
        <taxon>Tracheophyta</taxon>
        <taxon>Spermatophyta</taxon>
        <taxon>Magnoliopsida</taxon>
        <taxon>eudicotyledons</taxon>
        <taxon>Gunneridae</taxon>
        <taxon>Pentapetalae</taxon>
        <taxon>rosids</taxon>
        <taxon>malvids</taxon>
        <taxon>Brassicales</taxon>
        <taxon>Brassicaceae</taxon>
        <taxon>Camelineae</taxon>
        <taxon>Arabidopsis</taxon>
    </lineage>
</organism>
<feature type="chain" id="PRO_0000442079" description="Protein ESMERALDA 1">
    <location>
        <begin position="1"/>
        <end position="567"/>
    </location>
</feature>
<feature type="topological domain" description="Cytoplasmic" evidence="6">
    <location>
        <begin position="1"/>
        <end position="65"/>
    </location>
</feature>
<feature type="transmembrane region" description="Helical; Signal-anchor for type II membrane protein" evidence="6">
    <location>
        <begin position="66"/>
        <end position="86"/>
    </location>
</feature>
<feature type="topological domain" description="Lumenal" evidence="6">
    <location>
        <begin position="87"/>
        <end position="567"/>
    </location>
</feature>
<feature type="region of interest" description="Disordered" evidence="3">
    <location>
        <begin position="1"/>
        <end position="41"/>
    </location>
</feature>
<feature type="compositionally biased region" description="Basic residues" evidence="3">
    <location>
        <begin position="23"/>
        <end position="32"/>
    </location>
</feature>
<feature type="binding site" evidence="1">
    <location>
        <begin position="331"/>
        <end position="333"/>
    </location>
    <ligand>
        <name>substrate</name>
    </ligand>
</feature>
<feature type="glycosylation site" description="N-linked (GlcNAc...) asparagine" evidence="2">
    <location>
        <position position="121"/>
    </location>
</feature>
<feature type="glycosylation site" description="N-linked (GlcNAc...) asparagine" evidence="2">
    <location>
        <position position="145"/>
    </location>
</feature>
<feature type="glycosylation site" description="N-linked (GlcNAc...) asparagine" evidence="2">
    <location>
        <position position="184"/>
    </location>
</feature>
<feature type="glycosylation site" description="N-linked (GlcNAc...) asparagine" evidence="2">
    <location>
        <position position="238"/>
    </location>
</feature>
<feature type="glycosylation site" description="N-linked (GlcNAc...) asparagine" evidence="2">
    <location>
        <position position="403"/>
    </location>
</feature>
<feature type="glycosylation site" description="N-linked (GlcNAc...) asparagine" evidence="2">
    <location>
        <position position="419"/>
    </location>
</feature>
<feature type="glycosylation site" description="N-linked (GlcNAc...) asparagine" evidence="2">
    <location>
        <position position="449"/>
    </location>
</feature>
<feature type="glycosylation site" description="N-linked (GlcNAc...) asparagine" evidence="2">
    <location>
        <position position="538"/>
    </location>
</feature>
<feature type="glycosylation site" description="N-linked (GlcNAc...) asparagine" evidence="2">
    <location>
        <position position="554"/>
    </location>
</feature>
<sequence>MLAKNRLPGSGHTTPSPPASPRRSPRYRHGRSKAAAGSRFPTVQPSRTLAHRLSWILLSVLLRRQGIFLFAPLIYISCMLLYMGTVSFDVVPIIQRRPPPGSVYKSPQVYAKLRPEMDADNSTADAITTIWKHSYKGGEWKPYVNKSTGDLPESNGYIYVEANGGLNQQRTSICNAVAVAGYLNATLVIPNFHYHSIWRDPSKFGDIYDEEFFVSTLSNDVRVVDTIPEYLMERFDHNMTNVYNFRVKAWSPIQYYRDSILPKLLEEKIIRISPFANRLSFDAPQAVQRLRCLANYEALKFSKTILTLGETLVKRMKEQSANHGAKYVSVHLRFEEDMVAFSCCIFDGGNQEKQDMIAARERGWKGKFTKPGRVIRPGAIRQNGKCPLTPLEVGLMLRGMGFNKSTYIFLASGEIYDANRTMAPLLEMFPNLQTKEMLASEEELAPYKNFSSRMAAIDYTVCLHSEVFVTTQGGNFPHFLMGHRRYMFGGHSKTIRPDKRKLAILFDNPNIGWRSFKRQMLNMRSHSDSKGFELKRPNDSIYTFPCPDCMSRRNKTTTPESRPPPAT</sequence>
<evidence type="ECO:0000250" key="1">
    <source>
        <dbReference type="UniProtKB" id="Q9H488"/>
    </source>
</evidence>
<evidence type="ECO:0000255" key="2">
    <source>
        <dbReference type="PROSITE-ProRule" id="PRU00498"/>
    </source>
</evidence>
<evidence type="ECO:0000256" key="3">
    <source>
        <dbReference type="SAM" id="MobiDB-lite"/>
    </source>
</evidence>
<evidence type="ECO:0000269" key="4">
    <source>
    </source>
</evidence>
<evidence type="ECO:0000303" key="5">
    <source>
    </source>
</evidence>
<evidence type="ECO:0000305" key="6"/>
<evidence type="ECO:0000312" key="7">
    <source>
        <dbReference type="Araport" id="AT2G01480"/>
    </source>
</evidence>
<evidence type="ECO:0000312" key="8">
    <source>
        <dbReference type="EMBL" id="AAC67324.1"/>
    </source>
</evidence>
<evidence type="ECO:0000312" key="9">
    <source>
        <dbReference type="EMBL" id="ARJ31418.1"/>
    </source>
</evidence>
<accession>Q9ZVF7</accession>
<protein>
    <recommendedName>
        <fullName evidence="5 9">Protein ESMERALDA 1</fullName>
        <ecNumber evidence="6">2.4.1.-</ecNumber>
    </recommendedName>
    <alternativeName>
        <fullName evidence="6">O-fucosyltransferase 17</fullName>
        <shortName evidence="6">O-FucT-17</shortName>
    </alternativeName>
    <alternativeName>
        <fullName evidence="6">O-fucosyltransferase family protein</fullName>
    </alternativeName>
</protein>
<comment type="function">
    <text evidence="4">Glycosyltransferase that plays a role in cell adhesion.</text>
</comment>
<comment type="pathway">
    <text evidence="6">Protein modification; protein glycosylation.</text>
</comment>
<comment type="subcellular location">
    <subcellularLocation>
        <location evidence="4">Golgi apparatus membrane</location>
        <topology evidence="6">Single-pass type II membrane protein</topology>
    </subcellularLocation>
</comment>
<comment type="tissue specificity">
    <text evidence="4">Ubiquitous.</text>
</comment>
<comment type="similarity">
    <text evidence="6">Belongs to the glycosyltransferase GT106 family.</text>
</comment>
<dbReference type="EC" id="2.4.1.-" evidence="6"/>
<dbReference type="EMBL" id="KY906054">
    <property type="protein sequence ID" value="ARJ31418.1"/>
    <property type="molecule type" value="mRNA"/>
</dbReference>
<dbReference type="EMBL" id="AC005560">
    <property type="protein sequence ID" value="AAC67324.1"/>
    <property type="molecule type" value="Genomic_DNA"/>
</dbReference>
<dbReference type="EMBL" id="CP002685">
    <property type="protein sequence ID" value="AEC05459.1"/>
    <property type="molecule type" value="Genomic_DNA"/>
</dbReference>
<dbReference type="EMBL" id="AY093109">
    <property type="protein sequence ID" value="AAM13108.1"/>
    <property type="molecule type" value="mRNA"/>
</dbReference>
<dbReference type="EMBL" id="AY128818">
    <property type="protein sequence ID" value="AAM91218.1"/>
    <property type="molecule type" value="mRNA"/>
</dbReference>
<dbReference type="EMBL" id="AK227124">
    <property type="protein sequence ID" value="BAE99174.1"/>
    <property type="molecule type" value="mRNA"/>
</dbReference>
<dbReference type="PIR" id="C84425">
    <property type="entry name" value="C84425"/>
</dbReference>
<dbReference type="RefSeq" id="NP_178257.1">
    <property type="nucleotide sequence ID" value="NM_126209.3"/>
</dbReference>
<dbReference type="FunCoup" id="Q9ZVF7">
    <property type="interactions" value="1134"/>
</dbReference>
<dbReference type="STRING" id="3702.Q9ZVF7"/>
<dbReference type="GlyCosmos" id="Q9ZVF7">
    <property type="glycosylation" value="9 sites, No reported glycans"/>
</dbReference>
<dbReference type="GlyGen" id="Q9ZVF7">
    <property type="glycosylation" value="9 sites"/>
</dbReference>
<dbReference type="iPTMnet" id="Q9ZVF7"/>
<dbReference type="PaxDb" id="3702-AT2G01480.1"/>
<dbReference type="ProteomicsDB" id="220647"/>
<dbReference type="EnsemblPlants" id="AT2G01480.1">
    <property type="protein sequence ID" value="AT2G01480.1"/>
    <property type="gene ID" value="AT2G01480"/>
</dbReference>
<dbReference type="GeneID" id="814676"/>
<dbReference type="Gramene" id="AT2G01480.1">
    <property type="protein sequence ID" value="AT2G01480.1"/>
    <property type="gene ID" value="AT2G01480"/>
</dbReference>
<dbReference type="KEGG" id="ath:AT2G01480"/>
<dbReference type="Araport" id="AT2G01480"/>
<dbReference type="TAIR" id="AT2G01480">
    <property type="gene designation" value="ESMD1"/>
</dbReference>
<dbReference type="eggNOG" id="ENOG502QS6G">
    <property type="taxonomic scope" value="Eukaryota"/>
</dbReference>
<dbReference type="HOGENOM" id="CLU_018420_8_1_1"/>
<dbReference type="InParanoid" id="Q9ZVF7"/>
<dbReference type="OMA" id="HAYKGGI"/>
<dbReference type="OrthoDB" id="20368at2759"/>
<dbReference type="PhylomeDB" id="Q9ZVF7"/>
<dbReference type="UniPathway" id="UPA00378"/>
<dbReference type="PRO" id="PR:Q9ZVF7"/>
<dbReference type="Proteomes" id="UP000006548">
    <property type="component" value="Chromosome 2"/>
</dbReference>
<dbReference type="ExpressionAtlas" id="Q9ZVF7">
    <property type="expression patterns" value="baseline and differential"/>
</dbReference>
<dbReference type="GO" id="GO:0005794">
    <property type="term" value="C:Golgi apparatus"/>
    <property type="evidence" value="ECO:0000314"/>
    <property type="project" value="TAIR"/>
</dbReference>
<dbReference type="GO" id="GO:0000139">
    <property type="term" value="C:Golgi membrane"/>
    <property type="evidence" value="ECO:0007669"/>
    <property type="project" value="UniProtKB-SubCell"/>
</dbReference>
<dbReference type="GO" id="GO:0016757">
    <property type="term" value="F:glycosyltransferase activity"/>
    <property type="evidence" value="ECO:0007669"/>
    <property type="project" value="UniProtKB-KW"/>
</dbReference>
<dbReference type="GO" id="GO:0007155">
    <property type="term" value="P:cell adhesion"/>
    <property type="evidence" value="ECO:0000315"/>
    <property type="project" value="UniProtKB"/>
</dbReference>
<dbReference type="GO" id="GO:0071555">
    <property type="term" value="P:cell wall organization"/>
    <property type="evidence" value="ECO:0007669"/>
    <property type="project" value="UniProtKB-KW"/>
</dbReference>
<dbReference type="GO" id="GO:0006004">
    <property type="term" value="P:fucose metabolic process"/>
    <property type="evidence" value="ECO:0007669"/>
    <property type="project" value="UniProtKB-KW"/>
</dbReference>
<dbReference type="GO" id="GO:0006486">
    <property type="term" value="P:protein glycosylation"/>
    <property type="evidence" value="ECO:0007669"/>
    <property type="project" value="UniProtKB-UniPathway"/>
</dbReference>
<dbReference type="CDD" id="cd11299">
    <property type="entry name" value="O-FucT_plant"/>
    <property type="match status" value="1"/>
</dbReference>
<dbReference type="InterPro" id="IPR024709">
    <property type="entry name" value="FucosylTrfase_pln"/>
</dbReference>
<dbReference type="InterPro" id="IPR019378">
    <property type="entry name" value="GDP-Fuc_O-FucTrfase"/>
</dbReference>
<dbReference type="PANTHER" id="PTHR31288">
    <property type="entry name" value="O-FUCOSYLTRANSFERASE FAMILY PROTEIN"/>
    <property type="match status" value="1"/>
</dbReference>
<dbReference type="PANTHER" id="PTHR31288:SF10">
    <property type="entry name" value="PROTEIN ESMERALDA 1"/>
    <property type="match status" value="1"/>
</dbReference>
<dbReference type="Pfam" id="PF10250">
    <property type="entry name" value="O-FucT"/>
    <property type="match status" value="1"/>
</dbReference>
<dbReference type="PIRSF" id="PIRSF009360">
    <property type="entry name" value="UCP009360"/>
    <property type="match status" value="1"/>
</dbReference>